<sequence>MSTADALDDENTFKILVATDIHLGFMEKDAVRGNDTFVTLDEILRLARGNEVDFILLGGDLFHENKPSRKTLHTCLELLRKYCMGDRPVQFEILSDQSVNFGFSKFPWVNYQDGNLNISIPVFSIHGNHDDPTGADALCALDILSCAGFVNHFGRSMSVEKIDISPVLLQKGSTKIALYGLGSIPDERLYRMFVNKKVTMLRPKEDENSWFNLFVIHQNRSKHGSTNFIPEQFLDDFIDLVIWGHEHECKIAPTKNEQQLFYISQPGSSVVTSLSPGEAVKKHVGLLRIKGRKMNMQKIPLHTVRQFFMEDIVLANHPDIFNPDNPKVTQAIQSFCLEKIEEMLENAERERLGNSRQPEKPLVRLRVDYSGGFEPFSVLRFSQKFVDRVANPKDIIHFFRHREQKEKTGEEINFGKLITKPSEGTTLRVEDLVKQYFQTAEKNVQLSLLTERGMGEAVQEFVDKEEKDAIEELVKYQLEKTQRFLKERHIDALEDKIDEEVRRFRESRQKNTNEEDDEVREAMTRARALRSQSEESASAFSADDLMSIDLAEQMANDSDDSISAATNKGRGRGRGRRGGRGQNSASRGGSQRGRDTGLETSTRSRNSKTAVSASRNMSIIDAFKSTRQQPSRNVTTKNYSEVIEVDESDEEEDVFPTTSKTDQRWSSTSSSKIMSQSQVSKGVDFESSEDDDDDPFMNTSSLRRNRR</sequence>
<organism>
    <name type="scientific">Macaca fascicularis</name>
    <name type="common">Crab-eating macaque</name>
    <name type="synonym">Cynomolgus monkey</name>
    <dbReference type="NCBI Taxonomy" id="9541"/>
    <lineage>
        <taxon>Eukaryota</taxon>
        <taxon>Metazoa</taxon>
        <taxon>Chordata</taxon>
        <taxon>Craniata</taxon>
        <taxon>Vertebrata</taxon>
        <taxon>Euteleostomi</taxon>
        <taxon>Mammalia</taxon>
        <taxon>Eutheria</taxon>
        <taxon>Euarchontoglires</taxon>
        <taxon>Primates</taxon>
        <taxon>Haplorrhini</taxon>
        <taxon>Catarrhini</taxon>
        <taxon>Cercopithecidae</taxon>
        <taxon>Cercopithecinae</taxon>
        <taxon>Macaca</taxon>
    </lineage>
</organism>
<protein>
    <recommendedName>
        <fullName>Double-strand break repair protein MRE11</fullName>
        <ecNumber evidence="1">3.1.-.-</ecNumber>
    </recommendedName>
    <alternativeName>
        <fullName>Double-strand break repair protein MRE11A</fullName>
    </alternativeName>
    <alternativeName>
        <fullName>Meiotic recombination 11 homolog A</fullName>
        <shortName>MRE11 homolog A</shortName>
    </alternativeName>
</protein>
<proteinExistence type="evidence at transcript level"/>
<comment type="function">
    <text evidence="1 2">Core component of the MRN complex, which plays a central role in double-strand break (DSB) repair, DNA recombination, maintenance of telomere integrity and meiosis. The MRN complex is involved in the repair of DNA double-strand breaks (DSBs) via homologous recombination (HR), an error-free mechanism which primarily occurs during S and G2 phases. The complex (1) mediates the end resection of damaged DNA, which generates proper single-stranded DNA, a key initial steps in HR, and is (2) required for the recruitment of other repair factors and efficient activation of ATM and ATR upon DNA damage. Within the MRN complex, MRE11 possesses both single-strand endonuclease activity and double-strand-specific 3'-5' exonuclease activity. After DSBs, MRE11 is loaded onto DSBs sites and cleaves DNA by cooperating with RBBP8/CtIP to initiate end resection. MRE11 first endonucleolytically cleaves the 5' strand at DNA DSB ends to prevent non-homologous end joining (NHEJ) and licence HR. It then generates a single-stranded DNA gap via 3' to 5' exonucleolytic degradation to create entry sites for EXO1- and DNA2-mediated 5' to 3' long-range resection, which is required for single-strand invasion and recombination. RBBP8/CtIP specifically promotes the endonuclease activity of MRE11 to clear protein-DNA adducts and generate clean double-strand break ends. MRE11 endonuclease activity is also enhanced by AGER/RAGE. The MRN complex is also required for DNA damage signaling via activation of the ATM and ATR kinases: the nuclease activity of MRE11 is not required to activate ATM and ATR. The MRN complex is also required for the processing of R-loops (By similarity). The MRN complex is involved in the activation of the cGAS-STING pathway induced by DNA damage during tumorigenesis: the MRN complex acts by displacing CGAS from nucleosome sequestration, thereby activating it (By similarity). In telomeres the MRN complex may modulate t-loop formation (By similarity).</text>
</comment>
<comment type="cofactor">
    <cofactor evidence="1">
        <name>Mn(2+)</name>
        <dbReference type="ChEBI" id="CHEBI:29035"/>
    </cofactor>
</comment>
<comment type="activity regulation">
    <text evidence="1">Interaction with SAMHD1 stimulates the double-strand-specific 3'-5' exonuclease activity. RBBP8/CtIP specifically promotes the endonuclease activity to clear protein-DNA adducts and generate clean double-strand break ends. DYNLL1-binding inhibits the activity of MRE11. MRE11 activity is inhibited by C1QBP: in absence of DNA damage, C1QBP interacts with unphosphorylated MRE11, preventing formation and activity of the MRN complex.</text>
</comment>
<comment type="subunit">
    <text evidence="1 2">Component of the MRN complex composed of two heterodimers RAD50 and MRE11 associated with a single NBN. The MRN complexes dimerize on DNA to form joined MRN-MRN oligomers required for DNA double-strand break repair. As part of the MRN complex, interacts with MCM9; the interaction recruits the complex to DNA repair sites. Component of the BASC complex, at least composed of BRCA1, MSH2, MSH6, MLH1, ATM, BLM, RAD50, MRE11 and NBN. Found in a complex with TERF2. Interacts with DCLRE1C/Artemis and DCLRE1B/Apollo. Interacts with ATF2. Interacts with EXD2. Interacts with MRNIP. Interacts with SAMHD1; leading to stimulate 3'-5' exonuclease activity. Interacts (when ubiquitinated) with UBQLN4 (via its UBA domain) (By similarity). Interacts with CYREN (via XLF motif) (By similarity). Interacts with GFI1; promoting methylation by PRMT1. Interacts with DYNLL1; inhibiting the activity of MRE11. Interacts with C1QBP and RAD50; interaction takes place in absence of DNA damage to form the MRC (MRE11-RAD50-C1QBP) complex that inhibits the activity of MRE11 (By similarity). Interacts with AGER/RAGE; AGER is recruited to DNA double-strand break sites where it enhances MRE11 endonuclease activity to promote DNA repair (By similarity).</text>
</comment>
<comment type="subcellular location">
    <subcellularLocation>
        <location evidence="1">Nucleus</location>
    </subcellularLocation>
    <subcellularLocation>
        <location evidence="1">Chromosome</location>
    </subcellularLocation>
    <subcellularLocation>
        <location evidence="1">Chromosome</location>
        <location evidence="1">Telomere</location>
    </subcellularLocation>
    <text evidence="1">Localizes to DNA double-strand breaks (DSBs).</text>
</comment>
<comment type="PTM">
    <text evidence="1">Phosphorylated by ATM at Ser-675 and Ser-677 in response to DNA damage, promoting MRE11 activity: phosphorylation activates MRE11 by preventing the interaction between MRE11 and the C1QBP inhibitor (By similarity). Phosphorylation at Ser-648 by PLK1 primes for phosphorylation at Ser-687 by CK2, inhibiting recruitment of the MRN complex to DNA damage sites (By similarity).</text>
</comment>
<comment type="PTM">
    <text evidence="1">Asymmetric dimethylation by PRMT1 promotes MRE11 exonuclease activity.</text>
</comment>
<comment type="PTM">
    <text evidence="1">Lactylation at Lys-672 by CREBBP/CBP in response to DNA damage promotes DNA binding and MRE11 activity.</text>
</comment>
<comment type="PTM">
    <text evidence="1">Acetylated on lysine residues by KAT2A /GCN5.</text>
</comment>
<comment type="PTM">
    <text evidence="1">Ubiquitinated following DNA damage. Ubiquitination triggers interaction with UBQLN4, leading to MRE11 removal from chromatin and degradation by the proteasome. Ubiquitinated at Lys-339 and Lys-480 by RNF126 via 'Lys-27'- and 'Lys-29'-linked polyubiquitin chains, promoting the exonuclease activity of MRE11.</text>
</comment>
<comment type="PTM">
    <text evidence="1">SUMOylated by PIAS1, stabilizing MRE11 on chromatin during end resection. DeSUMOylated by SENP3 following removal from DNA double-strand breaks (DSBs).</text>
</comment>
<comment type="PTM">
    <text evidence="1">Ufmylation at Lys-282 promotes MRE11 activity and is required for activation of the ATM and ATR kinases by the MRN complex.</text>
</comment>
<comment type="similarity">
    <text evidence="4">Belongs to the MRE11/RAD32 family.</text>
</comment>
<evidence type="ECO:0000250" key="1">
    <source>
        <dbReference type="UniProtKB" id="P49959"/>
    </source>
</evidence>
<evidence type="ECO:0000250" key="2">
    <source>
        <dbReference type="UniProtKB" id="Q61216"/>
    </source>
</evidence>
<evidence type="ECO:0000256" key="3">
    <source>
        <dbReference type="SAM" id="MobiDB-lite"/>
    </source>
</evidence>
<evidence type="ECO:0000305" key="4"/>
<reference key="1">
    <citation type="submission" date="2003-10" db="EMBL/GenBank/DDBJ databases">
        <title>Isolation and characterization of cDNA for macaque neurological disease genes.</title>
        <authorList>
            <person name="Kusuda J."/>
            <person name="Osada N."/>
            <person name="Tanuma R."/>
            <person name="Hirata M."/>
            <person name="Sugano S."/>
            <person name="Hashimoto K."/>
        </authorList>
    </citation>
    <scope>NUCLEOTIDE SEQUENCE [LARGE SCALE MRNA]</scope>
    <source>
        <tissue>Temporal cortex</tissue>
    </source>
</reference>
<gene>
    <name type="primary">MRE11</name>
    <name type="synonym">MRE11A</name>
    <name type="ORF">QtrA-18006</name>
</gene>
<accession>Q60HE6</accession>
<feature type="initiator methionine" description="Removed" evidence="1">
    <location>
        <position position="1"/>
    </location>
</feature>
<feature type="chain" id="PRO_0000138673" description="Double-strand break repair protein MRE11">
    <location>
        <begin position="2"/>
        <end position="707"/>
    </location>
</feature>
<feature type="region of interest" description="Interaction with NBN" evidence="1">
    <location>
        <begin position="87"/>
        <end position="117"/>
    </location>
</feature>
<feature type="region of interest" description="Disordered" evidence="3">
    <location>
        <begin position="505"/>
        <end position="540"/>
    </location>
</feature>
<feature type="region of interest" description="Disordered" evidence="3">
    <location>
        <begin position="556"/>
        <end position="707"/>
    </location>
</feature>
<feature type="short sequence motif" description="GAR" evidence="1">
    <location>
        <begin position="570"/>
        <end position="594"/>
    </location>
</feature>
<feature type="compositionally biased region" description="Basic residues" evidence="3">
    <location>
        <begin position="569"/>
        <end position="579"/>
    </location>
</feature>
<feature type="compositionally biased region" description="Polar residues" evidence="3">
    <location>
        <begin position="598"/>
        <end position="617"/>
    </location>
</feature>
<feature type="compositionally biased region" description="Polar residues" evidence="3">
    <location>
        <begin position="625"/>
        <end position="639"/>
    </location>
</feature>
<feature type="compositionally biased region" description="Acidic residues" evidence="3">
    <location>
        <begin position="643"/>
        <end position="654"/>
    </location>
</feature>
<feature type="compositionally biased region" description="Low complexity" evidence="3">
    <location>
        <begin position="666"/>
        <end position="680"/>
    </location>
</feature>
<feature type="compositionally biased region" description="Acidic residues" evidence="3">
    <location>
        <begin position="686"/>
        <end position="695"/>
    </location>
</feature>
<feature type="compositionally biased region" description="Polar residues" evidence="3">
    <location>
        <begin position="697"/>
        <end position="707"/>
    </location>
</feature>
<feature type="active site" description="Proton donor" evidence="2">
    <location>
        <position position="129"/>
    </location>
</feature>
<feature type="binding site" evidence="1">
    <location>
        <position position="20"/>
    </location>
    <ligand>
        <name>Mn(2+)</name>
        <dbReference type="ChEBI" id="CHEBI:29035"/>
        <label>1</label>
    </ligand>
</feature>
<feature type="binding site" evidence="1">
    <location>
        <position position="22"/>
    </location>
    <ligand>
        <name>Mn(2+)</name>
        <dbReference type="ChEBI" id="CHEBI:29035"/>
        <label>1</label>
    </ligand>
</feature>
<feature type="binding site" evidence="1">
    <location>
        <position position="60"/>
    </location>
    <ligand>
        <name>Mn(2+)</name>
        <dbReference type="ChEBI" id="CHEBI:29035"/>
        <label>1</label>
    </ligand>
</feature>
<feature type="binding site" evidence="1">
    <location>
        <position position="60"/>
    </location>
    <ligand>
        <name>Mn(2+)</name>
        <dbReference type="ChEBI" id="CHEBI:29035"/>
        <label>2</label>
    </ligand>
</feature>
<feature type="binding site" evidence="1">
    <location>
        <position position="128"/>
    </location>
    <ligand>
        <name>Mn(2+)</name>
        <dbReference type="ChEBI" id="CHEBI:29035"/>
        <label>2</label>
    </ligand>
</feature>
<feature type="binding site" evidence="1">
    <location>
        <position position="217"/>
    </location>
    <ligand>
        <name>Mn(2+)</name>
        <dbReference type="ChEBI" id="CHEBI:29035"/>
        <label>2</label>
    </ligand>
</feature>
<feature type="binding site" evidence="1">
    <location>
        <position position="245"/>
    </location>
    <ligand>
        <name>Mn(2+)</name>
        <dbReference type="ChEBI" id="CHEBI:29035"/>
        <label>2</label>
    </ligand>
</feature>
<feature type="binding site" evidence="1">
    <location>
        <position position="247"/>
    </location>
    <ligand>
        <name>Mn(2+)</name>
        <dbReference type="ChEBI" id="CHEBI:29035"/>
        <label>1</label>
    </ligand>
</feature>
<feature type="modified residue" description="N-acetylserine" evidence="1">
    <location>
        <position position="2"/>
    </location>
</feature>
<feature type="modified residue" description="Phosphoserine" evidence="2">
    <location>
        <position position="2"/>
    </location>
</feature>
<feature type="modified residue" description="Phosphoserine" evidence="1">
    <location>
        <position position="275"/>
    </location>
</feature>
<feature type="modified residue" description="Asymmetric dimethylarginine" evidence="1">
    <location>
        <position position="570"/>
    </location>
</feature>
<feature type="modified residue" description="Asymmetric dimethylarginine" evidence="1">
    <location>
        <position position="572"/>
    </location>
</feature>
<feature type="modified residue" description="Asymmetric dimethylarginine" evidence="1">
    <location>
        <position position="574"/>
    </location>
</feature>
<feature type="modified residue" description="Asymmetric dimethylarginine" evidence="1">
    <location>
        <position position="576"/>
    </location>
</feature>
<feature type="modified residue" description="Asymmetric dimethylarginine" evidence="1">
    <location>
        <position position="577"/>
    </location>
</feature>
<feature type="modified residue" description="Asymmetric dimethylarginine" evidence="1">
    <location>
        <position position="580"/>
    </location>
</feature>
<feature type="modified residue" description="Asymmetric dimethylarginine" evidence="1">
    <location>
        <position position="587"/>
    </location>
</feature>
<feature type="modified residue" description="Asymmetric dimethylarginine" evidence="1">
    <location>
        <position position="592"/>
    </location>
</feature>
<feature type="modified residue" description="Asymmetric dimethylarginine" evidence="1">
    <location>
        <position position="594"/>
    </location>
</feature>
<feature type="modified residue" description="Phosphoserine" evidence="1">
    <location>
        <position position="618"/>
    </location>
</feature>
<feature type="modified residue" description="Phosphoserine" evidence="2">
    <location>
        <position position="640"/>
    </location>
</feature>
<feature type="modified residue" description="Phosphoserine" evidence="1">
    <location>
        <position position="648"/>
    </location>
</feature>
<feature type="modified residue" description="N6-lactoyllysine" evidence="1">
    <location>
        <position position="672"/>
    </location>
</feature>
<feature type="modified residue" description="Phosphoserine" evidence="1">
    <location>
        <position position="675"/>
    </location>
</feature>
<feature type="modified residue" description="Phosphoserine" evidence="1">
    <location>
        <position position="677"/>
    </location>
</feature>
<feature type="modified residue" description="Phosphoserine" evidence="1">
    <location>
        <position position="687"/>
    </location>
</feature>
<feature type="modified residue" description="Phosphoserine" evidence="1">
    <location>
        <position position="688"/>
    </location>
</feature>
<feature type="modified residue" description="Phosphoserine" evidence="1">
    <location>
        <position position="700"/>
    </location>
</feature>
<feature type="cross-link" description="Glycyl lysine isopeptide (Lys-Gly) (interchain with G-Cter in SUMO2)" evidence="1">
    <location>
        <position position="255"/>
    </location>
</feature>
<feature type="cross-link" description="Glycyl lysine isopeptide (Lys-Gly) (interchain with G-Cter in UFM1)" evidence="1">
    <location>
        <position position="282"/>
    </location>
</feature>
<feature type="cross-link" description="Glycyl lysine isopeptide (Lys-Gly) (interchain with G-Cter in ubiquitin)" evidence="1">
    <location>
        <position position="339"/>
    </location>
</feature>
<feature type="cross-link" description="Glycyl lysine isopeptide (Lys-Gly) (interchain with G-Cter in SUMO)" evidence="1">
    <location>
        <position position="384"/>
    </location>
</feature>
<feature type="cross-link" description="Glycyl lysine isopeptide (Lys-Gly) (interchain with G-Cter in SUMO2)" evidence="1">
    <location>
        <position position="416"/>
    </location>
</feature>
<feature type="cross-link" description="Glycyl lysine isopeptide (Lys-Gly) (interchain with G-Cter in SUMO)" evidence="1">
    <location>
        <position position="467"/>
    </location>
</feature>
<feature type="cross-link" description="Glycyl lysine isopeptide (Lys-Gly) (interchain with G-Cter in ubiquitin)" evidence="1">
    <location>
        <position position="480"/>
    </location>
</feature>
<feature type="cross-link" description="Glycyl lysine isopeptide (Lys-Gly) (interchain with G-Cter in SUMO2)" evidence="1">
    <location>
        <position position="624"/>
    </location>
</feature>
<name>MRE11_MACFA</name>
<keyword id="KW-0007">Acetylation</keyword>
<keyword id="KW-0158">Chromosome</keyword>
<keyword id="KW-0227">DNA damage</keyword>
<keyword id="KW-0234">DNA repair</keyword>
<keyword id="KW-0255">Endonuclease</keyword>
<keyword id="KW-0269">Exonuclease</keyword>
<keyword id="KW-0378">Hydrolase</keyword>
<keyword id="KW-1017">Isopeptide bond</keyword>
<keyword id="KW-0464">Manganese</keyword>
<keyword id="KW-0469">Meiosis</keyword>
<keyword id="KW-0479">Metal-binding</keyword>
<keyword id="KW-0488">Methylation</keyword>
<keyword id="KW-0540">Nuclease</keyword>
<keyword id="KW-0539">Nucleus</keyword>
<keyword id="KW-0597">Phosphoprotein</keyword>
<keyword id="KW-1185">Reference proteome</keyword>
<keyword id="KW-0779">Telomere</keyword>
<keyword id="KW-0832">Ubl conjugation</keyword>
<dbReference type="EC" id="3.1.-.-" evidence="1"/>
<dbReference type="EMBL" id="AB125181">
    <property type="protein sequence ID" value="BAD51969.1"/>
    <property type="molecule type" value="mRNA"/>
</dbReference>
<dbReference type="SMR" id="Q60HE6"/>
<dbReference type="STRING" id="9541.ENSMFAP00000043992"/>
<dbReference type="eggNOG" id="KOG2310">
    <property type="taxonomic scope" value="Eukaryota"/>
</dbReference>
<dbReference type="Proteomes" id="UP000233100">
    <property type="component" value="Unplaced"/>
</dbReference>
<dbReference type="GO" id="GO:0000781">
    <property type="term" value="C:chromosome, telomeric region"/>
    <property type="evidence" value="ECO:0007669"/>
    <property type="project" value="UniProtKB-SubCell"/>
</dbReference>
<dbReference type="GO" id="GO:0030870">
    <property type="term" value="C:Mre11 complex"/>
    <property type="evidence" value="ECO:0000250"/>
    <property type="project" value="UniProtKB"/>
</dbReference>
<dbReference type="GO" id="GO:0005657">
    <property type="term" value="C:replication fork"/>
    <property type="evidence" value="ECO:0000250"/>
    <property type="project" value="UniProtKB"/>
</dbReference>
<dbReference type="GO" id="GO:0035861">
    <property type="term" value="C:site of double-strand break"/>
    <property type="evidence" value="ECO:0000250"/>
    <property type="project" value="UniProtKB"/>
</dbReference>
<dbReference type="GO" id="GO:0008408">
    <property type="term" value="F:3'-5' exonuclease activity"/>
    <property type="evidence" value="ECO:0000250"/>
    <property type="project" value="UniProtKB"/>
</dbReference>
<dbReference type="GO" id="GO:0008296">
    <property type="term" value="F:3'-5'-DNA exonuclease activity"/>
    <property type="evidence" value="ECO:0007669"/>
    <property type="project" value="InterPro"/>
</dbReference>
<dbReference type="GO" id="GO:0004520">
    <property type="term" value="F:DNA endonuclease activity"/>
    <property type="evidence" value="ECO:0000250"/>
    <property type="project" value="UniProtKB"/>
</dbReference>
<dbReference type="GO" id="GO:0030145">
    <property type="term" value="F:manganese ion binding"/>
    <property type="evidence" value="ECO:0007669"/>
    <property type="project" value="InterPro"/>
</dbReference>
<dbReference type="GO" id="GO:0000014">
    <property type="term" value="F:single-stranded DNA endodeoxyribonuclease activity"/>
    <property type="evidence" value="ECO:0007669"/>
    <property type="project" value="TreeGrafter"/>
</dbReference>
<dbReference type="GO" id="GO:0006974">
    <property type="term" value="P:DNA damage response"/>
    <property type="evidence" value="ECO:0000250"/>
    <property type="project" value="UniProtKB"/>
</dbReference>
<dbReference type="GO" id="GO:0110025">
    <property type="term" value="P:DNA strand resection involved in replication fork processing"/>
    <property type="evidence" value="ECO:0000250"/>
    <property type="project" value="UniProtKB"/>
</dbReference>
<dbReference type="GO" id="GO:0000724">
    <property type="term" value="P:double-strand break repair via homologous recombination"/>
    <property type="evidence" value="ECO:0000250"/>
    <property type="project" value="UniProtKB"/>
</dbReference>
<dbReference type="GO" id="GO:0006303">
    <property type="term" value="P:double-strand break repair via nonhomologous end joining"/>
    <property type="evidence" value="ECO:0000250"/>
    <property type="project" value="UniProtKB"/>
</dbReference>
<dbReference type="GO" id="GO:0042138">
    <property type="term" value="P:meiotic DNA double-strand break formation"/>
    <property type="evidence" value="ECO:0007669"/>
    <property type="project" value="TreeGrafter"/>
</dbReference>
<dbReference type="GO" id="GO:0097552">
    <property type="term" value="P:mitochondrial double-strand break repair via homologous recombination"/>
    <property type="evidence" value="ECO:0007669"/>
    <property type="project" value="TreeGrafter"/>
</dbReference>
<dbReference type="GO" id="GO:0007095">
    <property type="term" value="P:mitotic G2 DNA damage checkpoint signaling"/>
    <property type="evidence" value="ECO:0007669"/>
    <property type="project" value="TreeGrafter"/>
</dbReference>
<dbReference type="GO" id="GO:0031573">
    <property type="term" value="P:mitotic intra-S DNA damage checkpoint signaling"/>
    <property type="evidence" value="ECO:0007669"/>
    <property type="project" value="TreeGrafter"/>
</dbReference>
<dbReference type="GO" id="GO:2001033">
    <property type="term" value="P:negative regulation of double-strand break repair via nonhomologous end joining"/>
    <property type="evidence" value="ECO:0000250"/>
    <property type="project" value="UniProtKB"/>
</dbReference>
<dbReference type="GO" id="GO:0062176">
    <property type="term" value="P:R-loop processing"/>
    <property type="evidence" value="ECO:0000250"/>
    <property type="project" value="UniProtKB"/>
</dbReference>
<dbReference type="GO" id="GO:0000723">
    <property type="term" value="P:telomere maintenance"/>
    <property type="evidence" value="ECO:0007669"/>
    <property type="project" value="TreeGrafter"/>
</dbReference>
<dbReference type="CDD" id="cd00840">
    <property type="entry name" value="MPP_Mre11_N"/>
    <property type="match status" value="1"/>
</dbReference>
<dbReference type="FunFam" id="3.30.110.110:FF:000001">
    <property type="entry name" value="Double-strand break repair protein"/>
    <property type="match status" value="1"/>
</dbReference>
<dbReference type="FunFam" id="3.60.21.10:FF:000011">
    <property type="entry name" value="Double-strand break repair protein"/>
    <property type="match status" value="1"/>
</dbReference>
<dbReference type="Gene3D" id="3.60.21.10">
    <property type="match status" value="1"/>
</dbReference>
<dbReference type="Gene3D" id="3.30.110.110">
    <property type="entry name" value="Mre11, capping domain"/>
    <property type="match status" value="1"/>
</dbReference>
<dbReference type="InterPro" id="IPR004843">
    <property type="entry name" value="Calcineurin-like_PHP_ApaH"/>
</dbReference>
<dbReference type="InterPro" id="IPR029052">
    <property type="entry name" value="Metallo-depent_PP-like"/>
</dbReference>
<dbReference type="InterPro" id="IPR003701">
    <property type="entry name" value="Mre11"/>
</dbReference>
<dbReference type="InterPro" id="IPR038487">
    <property type="entry name" value="Mre11_capping_dom"/>
</dbReference>
<dbReference type="InterPro" id="IPR007281">
    <property type="entry name" value="Mre11_DNA-bd"/>
</dbReference>
<dbReference type="InterPro" id="IPR041796">
    <property type="entry name" value="Mre11_N"/>
</dbReference>
<dbReference type="NCBIfam" id="TIGR00583">
    <property type="entry name" value="mre11"/>
    <property type="match status" value="1"/>
</dbReference>
<dbReference type="PANTHER" id="PTHR10139">
    <property type="entry name" value="DOUBLE-STRAND BREAK REPAIR PROTEIN MRE11"/>
    <property type="match status" value="1"/>
</dbReference>
<dbReference type="PANTHER" id="PTHR10139:SF1">
    <property type="entry name" value="DOUBLE-STRAND BREAK REPAIR PROTEIN MRE11"/>
    <property type="match status" value="1"/>
</dbReference>
<dbReference type="Pfam" id="PF00149">
    <property type="entry name" value="Metallophos"/>
    <property type="match status" value="1"/>
</dbReference>
<dbReference type="Pfam" id="PF04152">
    <property type="entry name" value="Mre11_DNA_bind"/>
    <property type="match status" value="1"/>
</dbReference>
<dbReference type="PIRSF" id="PIRSF000882">
    <property type="entry name" value="DSB_repair_MRE11"/>
    <property type="match status" value="1"/>
</dbReference>
<dbReference type="SMART" id="SM01347">
    <property type="entry name" value="Mre11_DNA_bind"/>
    <property type="match status" value="1"/>
</dbReference>
<dbReference type="SUPFAM" id="SSF56300">
    <property type="entry name" value="Metallo-dependent phosphatases"/>
    <property type="match status" value="1"/>
</dbReference>